<name>YBJL_ECOUT</name>
<sequence length="561" mass="60351">MNINVAELLNGNYILLLFVVLALGLCLGKLRLGSIQLGNSIGVLVVSLLLGQQHFSINTDALNLGFMLFIFCVGVEAGPNFFSIFFRDGKNYLMLALVMVGSALVIALGLGKLFGWDIGLTAGMLAGSMTSTPVLVGAGDTLRHSGMESRQLSLALDNLSLGYALTYLIGLVSLIVGARYLPKLQHQDLQTSAQQIARERGLDTDANRKVYLPVIRAYRVGPELVAWTDGKNLRELGIYRQTGCYIERIRRNGILANPDGDAVLQMGDEIALVGYPDAHARLDPSFRNGKEVFDRDLLDMRIVTEEVVVKNHNAVGKRLAQLKLTDHGCFLNRVIRSQIEMPIDDNVVLNKGDVLQVSGDARRVKTIADRIGFISIHSQVTDLLAFCAFFVIGLMIGMITFQFSTFSFGMGNAAGLLFAGIMLGFMRANHPTFGYIPQGALSMVKEFGLMVFMAGVGLSAGSGINNGLGAIGGQMLIAGLIVSLVPVVICFLFGAYVLRMNRALLFGAMMGARTCAPAMEIISDTARSNIPALGYAGTYAIANVLLTLAGTIIVMVWPGLG</sequence>
<organism>
    <name type="scientific">Escherichia coli (strain UTI89 / UPEC)</name>
    <dbReference type="NCBI Taxonomy" id="364106"/>
    <lineage>
        <taxon>Bacteria</taxon>
        <taxon>Pseudomonadati</taxon>
        <taxon>Pseudomonadota</taxon>
        <taxon>Gammaproteobacteria</taxon>
        <taxon>Enterobacterales</taxon>
        <taxon>Enterobacteriaceae</taxon>
        <taxon>Escherichia</taxon>
    </lineage>
</organism>
<dbReference type="EMBL" id="CP000243">
    <property type="protein sequence ID" value="ABE06336.1"/>
    <property type="molecule type" value="Genomic_DNA"/>
</dbReference>
<dbReference type="RefSeq" id="WP_001024876.1">
    <property type="nucleotide sequence ID" value="NZ_CP064825.1"/>
</dbReference>
<dbReference type="SMR" id="Q1RE78"/>
<dbReference type="KEGG" id="eci:UTI89_C0850"/>
<dbReference type="HOGENOM" id="CLU_035023_2_2_6"/>
<dbReference type="Proteomes" id="UP000001952">
    <property type="component" value="Chromosome"/>
</dbReference>
<dbReference type="GO" id="GO:0005886">
    <property type="term" value="C:plasma membrane"/>
    <property type="evidence" value="ECO:0007669"/>
    <property type="project" value="UniProtKB-SubCell"/>
</dbReference>
<dbReference type="GO" id="GO:0008324">
    <property type="term" value="F:monoatomic cation transmembrane transporter activity"/>
    <property type="evidence" value="ECO:0007669"/>
    <property type="project" value="InterPro"/>
</dbReference>
<dbReference type="GO" id="GO:0006813">
    <property type="term" value="P:potassium ion transport"/>
    <property type="evidence" value="ECO:0007669"/>
    <property type="project" value="InterPro"/>
</dbReference>
<dbReference type="FunFam" id="3.30.70.1450:FF:000003">
    <property type="entry name" value="Putative transport protein YbjL"/>
    <property type="match status" value="1"/>
</dbReference>
<dbReference type="Gene3D" id="3.30.70.1450">
    <property type="entry name" value="Regulator of K+ conductance, C-terminal domain"/>
    <property type="match status" value="2"/>
</dbReference>
<dbReference type="HAMAP" id="MF_01015">
    <property type="entry name" value="YbjL"/>
    <property type="match status" value="1"/>
</dbReference>
<dbReference type="InterPro" id="IPR050144">
    <property type="entry name" value="AAE_transporter"/>
</dbReference>
<dbReference type="InterPro" id="IPR006037">
    <property type="entry name" value="RCK_C"/>
</dbReference>
<dbReference type="InterPro" id="IPR036721">
    <property type="entry name" value="RCK_C_sf"/>
</dbReference>
<dbReference type="InterPro" id="IPR023017">
    <property type="entry name" value="Transp_YbjL_put"/>
</dbReference>
<dbReference type="InterPro" id="IPR006512">
    <property type="entry name" value="YidE_YbjL"/>
</dbReference>
<dbReference type="NCBIfam" id="NF003440">
    <property type="entry name" value="PRK04972.1"/>
    <property type="match status" value="1"/>
</dbReference>
<dbReference type="NCBIfam" id="TIGR01625">
    <property type="entry name" value="YidE_YbjL_dupl"/>
    <property type="match status" value="2"/>
</dbReference>
<dbReference type="PANTHER" id="PTHR30445">
    <property type="entry name" value="K(+)_H(+) ANTIPORTER SUBUNIT KHTT"/>
    <property type="match status" value="1"/>
</dbReference>
<dbReference type="PANTHER" id="PTHR30445:SF10">
    <property type="entry name" value="TRANSPORT PROTEIN YBJL-RELATED"/>
    <property type="match status" value="1"/>
</dbReference>
<dbReference type="Pfam" id="PF06826">
    <property type="entry name" value="Asp-Al_Ex"/>
    <property type="match status" value="2"/>
</dbReference>
<dbReference type="Pfam" id="PF02080">
    <property type="entry name" value="TrkA_C"/>
    <property type="match status" value="2"/>
</dbReference>
<dbReference type="SUPFAM" id="SSF116726">
    <property type="entry name" value="TrkA C-terminal domain-like"/>
    <property type="match status" value="2"/>
</dbReference>
<dbReference type="PROSITE" id="PS51202">
    <property type="entry name" value="RCK_C"/>
    <property type="match status" value="2"/>
</dbReference>
<reference key="1">
    <citation type="journal article" date="2006" name="Proc. Natl. Acad. Sci. U.S.A.">
        <title>Identification of genes subject to positive selection in uropathogenic strains of Escherichia coli: a comparative genomics approach.</title>
        <authorList>
            <person name="Chen S.L."/>
            <person name="Hung C.-S."/>
            <person name="Xu J."/>
            <person name="Reigstad C.S."/>
            <person name="Magrini V."/>
            <person name="Sabo A."/>
            <person name="Blasiar D."/>
            <person name="Bieri T."/>
            <person name="Meyer R.R."/>
            <person name="Ozersky P."/>
            <person name="Armstrong J.R."/>
            <person name="Fulton R.S."/>
            <person name="Latreille J.P."/>
            <person name="Spieth J."/>
            <person name="Hooton T.M."/>
            <person name="Mardis E.R."/>
            <person name="Hultgren S.J."/>
            <person name="Gordon J.I."/>
        </authorList>
    </citation>
    <scope>NUCLEOTIDE SEQUENCE [LARGE SCALE GENOMIC DNA]</scope>
    <source>
        <strain>UTI89 / UPEC</strain>
    </source>
</reference>
<keyword id="KW-1003">Cell membrane</keyword>
<keyword id="KW-0472">Membrane</keyword>
<keyword id="KW-0677">Repeat</keyword>
<keyword id="KW-0812">Transmembrane</keyword>
<keyword id="KW-1133">Transmembrane helix</keyword>
<keyword id="KW-0813">Transport</keyword>
<accession>Q1RE78</accession>
<comment type="subcellular location">
    <subcellularLocation>
        <location evidence="1">Cell membrane</location>
        <topology evidence="1">Multi-pass membrane protein</topology>
    </subcellularLocation>
</comment>
<comment type="similarity">
    <text evidence="1">Belongs to the AAE transporter (TC 2.A.81) family. YbjL subfamily.</text>
</comment>
<feature type="chain" id="PRO_0000329141" description="Putative transport protein YbjL">
    <location>
        <begin position="1"/>
        <end position="561"/>
    </location>
</feature>
<feature type="transmembrane region" description="Helical" evidence="1">
    <location>
        <begin position="8"/>
        <end position="28"/>
    </location>
</feature>
<feature type="transmembrane region" description="Helical" evidence="1">
    <location>
        <begin position="32"/>
        <end position="52"/>
    </location>
</feature>
<feature type="transmembrane region" description="Helical" evidence="1">
    <location>
        <begin position="66"/>
        <end position="86"/>
    </location>
</feature>
<feature type="transmembrane region" description="Helical" evidence="1">
    <location>
        <begin position="94"/>
        <end position="114"/>
    </location>
</feature>
<feature type="transmembrane region" description="Helical" evidence="1">
    <location>
        <begin position="158"/>
        <end position="178"/>
    </location>
</feature>
<feature type="transmembrane region" description="Helical" evidence="1">
    <location>
        <begin position="383"/>
        <end position="403"/>
    </location>
</feature>
<feature type="transmembrane region" description="Helical" evidence="1">
    <location>
        <begin position="406"/>
        <end position="426"/>
    </location>
</feature>
<feature type="transmembrane region" description="Helical" evidence="1">
    <location>
        <begin position="451"/>
        <end position="471"/>
    </location>
</feature>
<feature type="transmembrane region" description="Helical" evidence="1">
    <location>
        <begin position="475"/>
        <end position="495"/>
    </location>
</feature>
<feature type="transmembrane region" description="Helical" evidence="1">
    <location>
        <begin position="540"/>
        <end position="560"/>
    </location>
</feature>
<feature type="domain" description="RCK C-terminal 1" evidence="1">
    <location>
        <begin position="200"/>
        <end position="288"/>
    </location>
</feature>
<feature type="domain" description="RCK C-terminal 2" evidence="1">
    <location>
        <begin position="292"/>
        <end position="373"/>
    </location>
</feature>
<evidence type="ECO:0000255" key="1">
    <source>
        <dbReference type="HAMAP-Rule" id="MF_01015"/>
    </source>
</evidence>
<gene>
    <name evidence="1" type="primary">ybjL</name>
    <name type="ordered locus">UTI89_C0850</name>
</gene>
<protein>
    <recommendedName>
        <fullName evidence="1">Putative transport protein YbjL</fullName>
    </recommendedName>
</protein>
<proteinExistence type="inferred from homology"/>